<accession>Q9CQ75</accession>
<accession>Q9WUB2</accession>
<keyword id="KW-0002">3D-structure</keyword>
<keyword id="KW-0007">Acetylation</keyword>
<keyword id="KW-0903">Direct protein sequencing</keyword>
<keyword id="KW-1015">Disulfide bond</keyword>
<keyword id="KW-0249">Electron transport</keyword>
<keyword id="KW-0472">Membrane</keyword>
<keyword id="KW-0496">Mitochondrion</keyword>
<keyword id="KW-0999">Mitochondrion inner membrane</keyword>
<keyword id="KW-1185">Reference proteome</keyword>
<keyword id="KW-0679">Respiratory chain</keyword>
<keyword id="KW-0813">Transport</keyword>
<gene>
    <name type="primary">Ndufa2</name>
</gene>
<comment type="function">
    <text evidence="4">Accessory subunit of the mitochondrial membrane respiratory chain NADH dehydrogenase (Complex I), that is believed not to be involved in catalysis. Complex I functions in the transfer of electrons from NADH to the respiratory chain. The immediate electron acceptor for the enzyme is believed to be ubiquinone.</text>
</comment>
<comment type="subunit">
    <text evidence="4">Complex I is composed of 45 different subunits.</text>
</comment>
<comment type="subcellular location">
    <subcellularLocation>
        <location evidence="4">Mitochondrion inner membrane</location>
        <topology evidence="4">Peripheral membrane protein</topology>
        <orientation evidence="4">Matrix side</orientation>
    </subcellularLocation>
</comment>
<comment type="PTM">
    <text evidence="3">Acetylation of Lys-64 and Lys-75 is observed in liver mitochondria from fasted mice but not from fed mice.</text>
</comment>
<comment type="similarity">
    <text evidence="5">Belongs to the complex I NDUFA2 subunit family.</text>
</comment>
<proteinExistence type="evidence at protein level"/>
<feature type="initiator methionine" description="Removed" evidence="2">
    <location>
        <position position="1"/>
    </location>
</feature>
<feature type="chain" id="PRO_0000118790" description="NADH dehydrogenase [ubiquinone] 1 alpha subcomplex subunit 2">
    <location>
        <begin position="2"/>
        <end position="99"/>
    </location>
</feature>
<feature type="modified residue" description="N-acetylalanine" evidence="2">
    <location>
        <position position="2"/>
    </location>
</feature>
<feature type="modified residue" description="N6-acetyllysine; alternate" evidence="7">
    <location>
        <position position="64"/>
    </location>
</feature>
<feature type="modified residue" description="N6-succinyllysine; alternate" evidence="8">
    <location>
        <position position="64"/>
    </location>
</feature>
<feature type="modified residue" description="N6-acetyllysine" evidence="7">
    <location>
        <position position="75"/>
    </location>
</feature>
<feature type="disulfide bond" description="Redox-active" evidence="1">
    <location>
        <begin position="24"/>
        <end position="58"/>
    </location>
</feature>
<feature type="sequence conflict" description="In Ref. 1; AAD30475." evidence="5" ref="1">
    <original>A</original>
    <variation>T</variation>
    <location>
        <position position="12"/>
    </location>
</feature>
<feature type="strand" evidence="12">
    <location>
        <begin position="16"/>
        <end position="23"/>
    </location>
</feature>
<feature type="strand" evidence="10">
    <location>
        <begin position="25"/>
        <end position="27"/>
    </location>
</feature>
<feature type="helix" evidence="12">
    <location>
        <begin position="28"/>
        <end position="30"/>
    </location>
</feature>
<feature type="helix" evidence="12">
    <location>
        <begin position="31"/>
        <end position="47"/>
    </location>
</feature>
<feature type="strand" evidence="9">
    <location>
        <begin position="48"/>
        <end position="51"/>
    </location>
</feature>
<feature type="strand" evidence="12">
    <location>
        <begin position="53"/>
        <end position="57"/>
    </location>
</feature>
<feature type="strand" evidence="11">
    <location>
        <begin position="59"/>
        <end position="61"/>
    </location>
</feature>
<feature type="strand" evidence="12">
    <location>
        <begin position="64"/>
        <end position="69"/>
    </location>
</feature>
<feature type="turn" evidence="12">
    <location>
        <begin position="70"/>
        <end position="72"/>
    </location>
</feature>
<feature type="strand" evidence="12">
    <location>
        <begin position="73"/>
        <end position="78"/>
    </location>
</feature>
<feature type="helix" evidence="12">
    <location>
        <begin position="84"/>
        <end position="96"/>
    </location>
</feature>
<protein>
    <recommendedName>
        <fullName>NADH dehydrogenase [ubiquinone] 1 alpha subcomplex subunit 2</fullName>
    </recommendedName>
    <alternativeName>
        <fullName>Complex I-B8</fullName>
        <shortName>CI-B8</shortName>
    </alternativeName>
    <alternativeName>
        <fullName>NADH-ubiquinone oxidoreductase B8 subunit</fullName>
    </alternativeName>
</protein>
<dbReference type="EMBL" id="AF124786">
    <property type="protein sequence ID" value="AAD30475.1"/>
    <property type="molecule type" value="mRNA"/>
</dbReference>
<dbReference type="EMBL" id="AK003608">
    <property type="protein sequence ID" value="BAB22887.1"/>
    <property type="molecule type" value="mRNA"/>
</dbReference>
<dbReference type="EMBL" id="AK018732">
    <property type="protein sequence ID" value="BAB31375.1"/>
    <property type="molecule type" value="mRNA"/>
</dbReference>
<dbReference type="EMBL" id="BC006815">
    <property type="protein sequence ID" value="AAH06815.1"/>
    <property type="molecule type" value="mRNA"/>
</dbReference>
<dbReference type="CCDS" id="CCDS29161.1"/>
<dbReference type="RefSeq" id="NP_035015.2">
    <property type="nucleotide sequence ID" value="NM_010885.5"/>
</dbReference>
<dbReference type="PDB" id="6G2J">
    <property type="method" value="EM"/>
    <property type="resolution" value="3.30 A"/>
    <property type="chains" value="S=1-99"/>
</dbReference>
<dbReference type="PDB" id="6G72">
    <property type="method" value="EM"/>
    <property type="resolution" value="3.90 A"/>
    <property type="chains" value="S=1-99"/>
</dbReference>
<dbReference type="PDB" id="6ZR2">
    <property type="method" value="EM"/>
    <property type="resolution" value="3.10 A"/>
    <property type="chains" value="S=1-99"/>
</dbReference>
<dbReference type="PDB" id="6ZTQ">
    <property type="method" value="EM"/>
    <property type="resolution" value="3.00 A"/>
    <property type="chains" value="S=1-99"/>
</dbReference>
<dbReference type="PDB" id="7AK5">
    <property type="method" value="EM"/>
    <property type="resolution" value="3.17 A"/>
    <property type="chains" value="S=1-99"/>
</dbReference>
<dbReference type="PDB" id="7AK6">
    <property type="method" value="EM"/>
    <property type="resolution" value="3.82 A"/>
    <property type="chains" value="S=1-99"/>
</dbReference>
<dbReference type="PDB" id="7B93">
    <property type="method" value="EM"/>
    <property type="resolution" value="3.04 A"/>
    <property type="chains" value="S=1-99"/>
</dbReference>
<dbReference type="PDB" id="7PSA">
    <property type="method" value="EM"/>
    <property type="resolution" value="3.40 A"/>
    <property type="chains" value="S=1-99"/>
</dbReference>
<dbReference type="PDB" id="8C2S">
    <property type="method" value="EM"/>
    <property type="resolution" value="3.90 A"/>
    <property type="chains" value="S=1-99"/>
</dbReference>
<dbReference type="PDB" id="8CA3">
    <property type="method" value="EM"/>
    <property type="resolution" value="3.20 A"/>
    <property type="chains" value="S=1-99"/>
</dbReference>
<dbReference type="PDB" id="8CA4">
    <property type="method" value="EM"/>
    <property type="resolution" value="3.25 A"/>
    <property type="chains" value="S=1-99"/>
</dbReference>
<dbReference type="PDB" id="8CA5">
    <property type="method" value="EM"/>
    <property type="resolution" value="3.90 A"/>
    <property type="chains" value="S=1-99"/>
</dbReference>
<dbReference type="PDB" id="8IAO">
    <property type="method" value="EM"/>
    <property type="resolution" value="4.20 A"/>
    <property type="chains" value="S=1-99"/>
</dbReference>
<dbReference type="PDB" id="8IAP">
    <property type="method" value="EM"/>
    <property type="resolution" value="3.20 A"/>
    <property type="chains" value="S=1-99"/>
</dbReference>
<dbReference type="PDB" id="8IB4">
    <property type="method" value="EM"/>
    <property type="resolution" value="4.30 A"/>
    <property type="chains" value="S=1-99"/>
</dbReference>
<dbReference type="PDB" id="8IB5">
    <property type="method" value="EM"/>
    <property type="resolution" value="3.30 A"/>
    <property type="chains" value="S=1-99"/>
</dbReference>
<dbReference type="PDB" id="8IB9">
    <property type="method" value="EM"/>
    <property type="resolution" value="4.30 A"/>
    <property type="chains" value="S=1-99"/>
</dbReference>
<dbReference type="PDB" id="8IBA">
    <property type="method" value="EM"/>
    <property type="resolution" value="3.20 A"/>
    <property type="chains" value="S=1-99"/>
</dbReference>
<dbReference type="PDB" id="8IBD">
    <property type="method" value="EM"/>
    <property type="resolution" value="4.20 A"/>
    <property type="chains" value="S=1-99"/>
</dbReference>
<dbReference type="PDB" id="8IBE">
    <property type="method" value="EM"/>
    <property type="resolution" value="3.30 A"/>
    <property type="chains" value="S=1-99"/>
</dbReference>
<dbReference type="PDB" id="8IC2">
    <property type="method" value="EM"/>
    <property type="resolution" value="6.30 A"/>
    <property type="chains" value="S=1-99"/>
</dbReference>
<dbReference type="PDB" id="8IC3">
    <property type="method" value="EM"/>
    <property type="resolution" value="3.20 A"/>
    <property type="chains" value="S=1-99"/>
</dbReference>
<dbReference type="PDB" id="8OLT">
    <property type="method" value="EM"/>
    <property type="resolution" value="2.84 A"/>
    <property type="chains" value="S=1-99"/>
</dbReference>
<dbReference type="PDB" id="8OM1">
    <property type="method" value="EM"/>
    <property type="resolution" value="2.39 A"/>
    <property type="chains" value="S=1-99"/>
</dbReference>
<dbReference type="PDB" id="8PW5">
    <property type="method" value="EM"/>
    <property type="resolution" value="3.60 A"/>
    <property type="chains" value="S1=1-99"/>
</dbReference>
<dbReference type="PDB" id="8PW6">
    <property type="method" value="EM"/>
    <property type="resolution" value="3.30 A"/>
    <property type="chains" value="S1=1-99"/>
</dbReference>
<dbReference type="PDB" id="8PW7">
    <property type="method" value="EM"/>
    <property type="resolution" value="3.50 A"/>
    <property type="chains" value="S1=1-99"/>
</dbReference>
<dbReference type="PDB" id="8RGP">
    <property type="method" value="EM"/>
    <property type="resolution" value="3.00 A"/>
    <property type="chains" value="S=1-99"/>
</dbReference>
<dbReference type="PDB" id="8RGQ">
    <property type="method" value="EM"/>
    <property type="resolution" value="3.00 A"/>
    <property type="chains" value="S=1-99"/>
</dbReference>
<dbReference type="PDB" id="8RGR">
    <property type="method" value="EM"/>
    <property type="resolution" value="2.90 A"/>
    <property type="chains" value="S=1-99"/>
</dbReference>
<dbReference type="PDB" id="8RGT">
    <property type="method" value="EM"/>
    <property type="resolution" value="3.10 A"/>
    <property type="chains" value="S=1-99"/>
</dbReference>
<dbReference type="PDB" id="8UCA">
    <property type="method" value="EM"/>
    <property type="resolution" value="3.70 A"/>
    <property type="chains" value="A2/a2=1-99"/>
</dbReference>
<dbReference type="PDB" id="8XNL">
    <property type="method" value="EM"/>
    <property type="resolution" value="3.10 A"/>
    <property type="chains" value="S=1-99"/>
</dbReference>
<dbReference type="PDB" id="8XNM">
    <property type="method" value="EM"/>
    <property type="resolution" value="3.50 A"/>
    <property type="chains" value="S=1-99"/>
</dbReference>
<dbReference type="PDB" id="8XNN">
    <property type="method" value="EM"/>
    <property type="resolution" value="3.60 A"/>
    <property type="chains" value="S=1-99"/>
</dbReference>
<dbReference type="PDB" id="8XNO">
    <property type="method" value="EM"/>
    <property type="resolution" value="3.40 A"/>
    <property type="chains" value="S=1-99"/>
</dbReference>
<dbReference type="PDB" id="8XNP">
    <property type="method" value="EM"/>
    <property type="resolution" value="3.50 A"/>
    <property type="chains" value="S=1-99"/>
</dbReference>
<dbReference type="PDB" id="8XNQ">
    <property type="method" value="EM"/>
    <property type="resolution" value="3.70 A"/>
    <property type="chains" value="S=1-99"/>
</dbReference>
<dbReference type="PDB" id="8XNR">
    <property type="method" value="EM"/>
    <property type="resolution" value="3.30 A"/>
    <property type="chains" value="S=1-99"/>
</dbReference>
<dbReference type="PDB" id="8XNS">
    <property type="method" value="EM"/>
    <property type="resolution" value="3.50 A"/>
    <property type="chains" value="S=1-99"/>
</dbReference>
<dbReference type="PDB" id="8XNT">
    <property type="method" value="EM"/>
    <property type="resolution" value="4.10 A"/>
    <property type="chains" value="S=1-99"/>
</dbReference>
<dbReference type="PDB" id="8XNU">
    <property type="method" value="EM"/>
    <property type="resolution" value="3.60 A"/>
    <property type="chains" value="S=1-99"/>
</dbReference>
<dbReference type="PDB" id="8XNV">
    <property type="method" value="EM"/>
    <property type="resolution" value="3.30 A"/>
    <property type="chains" value="S=1-99"/>
</dbReference>
<dbReference type="PDB" id="8XNW">
    <property type="method" value="EM"/>
    <property type="resolution" value="3.60 A"/>
    <property type="chains" value="S=1-99"/>
</dbReference>
<dbReference type="PDB" id="8XNX">
    <property type="method" value="EM"/>
    <property type="resolution" value="3.50 A"/>
    <property type="chains" value="S=1-99"/>
</dbReference>
<dbReference type="PDB" id="8XNY">
    <property type="method" value="EM"/>
    <property type="resolution" value="4.10 A"/>
    <property type="chains" value="S=1-99"/>
</dbReference>
<dbReference type="PDB" id="8XNZ">
    <property type="method" value="EM"/>
    <property type="resolution" value="3.30 A"/>
    <property type="chains" value="S=1-99"/>
</dbReference>
<dbReference type="PDB" id="8XO0">
    <property type="method" value="EM"/>
    <property type="resolution" value="4.20 A"/>
    <property type="chains" value="S=1-99"/>
</dbReference>
<dbReference type="PDBsum" id="6G2J"/>
<dbReference type="PDBsum" id="6G72"/>
<dbReference type="PDBsum" id="6ZR2"/>
<dbReference type="PDBsum" id="6ZTQ"/>
<dbReference type="PDBsum" id="7AK5"/>
<dbReference type="PDBsum" id="7AK6"/>
<dbReference type="PDBsum" id="7B93"/>
<dbReference type="PDBsum" id="7PSA"/>
<dbReference type="PDBsum" id="8C2S"/>
<dbReference type="PDBsum" id="8CA3"/>
<dbReference type="PDBsum" id="8CA4"/>
<dbReference type="PDBsum" id="8CA5"/>
<dbReference type="PDBsum" id="8IAO"/>
<dbReference type="PDBsum" id="8IAP"/>
<dbReference type="PDBsum" id="8IB4"/>
<dbReference type="PDBsum" id="8IB5"/>
<dbReference type="PDBsum" id="8IB9"/>
<dbReference type="PDBsum" id="8IBA"/>
<dbReference type="PDBsum" id="8IBD"/>
<dbReference type="PDBsum" id="8IBE"/>
<dbReference type="PDBsum" id="8IC2"/>
<dbReference type="PDBsum" id="8IC3"/>
<dbReference type="PDBsum" id="8OLT"/>
<dbReference type="PDBsum" id="8OM1"/>
<dbReference type="PDBsum" id="8PW5"/>
<dbReference type="PDBsum" id="8PW6"/>
<dbReference type="PDBsum" id="8PW7"/>
<dbReference type="PDBsum" id="8RGP"/>
<dbReference type="PDBsum" id="8RGQ"/>
<dbReference type="PDBsum" id="8RGR"/>
<dbReference type="PDBsum" id="8RGT"/>
<dbReference type="PDBsum" id="8UCA"/>
<dbReference type="PDBsum" id="8XNL"/>
<dbReference type="PDBsum" id="8XNM"/>
<dbReference type="PDBsum" id="8XNN"/>
<dbReference type="PDBsum" id="8XNO"/>
<dbReference type="PDBsum" id="8XNP"/>
<dbReference type="PDBsum" id="8XNQ"/>
<dbReference type="PDBsum" id="8XNR"/>
<dbReference type="PDBsum" id="8XNS"/>
<dbReference type="PDBsum" id="8XNT"/>
<dbReference type="PDBsum" id="8XNU"/>
<dbReference type="PDBsum" id="8XNV"/>
<dbReference type="PDBsum" id="8XNW"/>
<dbReference type="PDBsum" id="8XNX"/>
<dbReference type="PDBsum" id="8XNY"/>
<dbReference type="PDBsum" id="8XNZ"/>
<dbReference type="PDBsum" id="8XO0"/>
<dbReference type="EMDB" id="EMD-11377"/>
<dbReference type="EMDB" id="EMD-11424"/>
<dbReference type="EMDB" id="EMD-11810"/>
<dbReference type="EMDB" id="EMD-11811"/>
<dbReference type="EMDB" id="EMD-12095"/>
<dbReference type="EMDB" id="EMD-13611"/>
<dbReference type="EMDB" id="EMD-16398"/>
<dbReference type="EMDB" id="EMD-16516"/>
<dbReference type="EMDB" id="EMD-16517"/>
<dbReference type="EMDB" id="EMD-16518"/>
<dbReference type="EMDB" id="EMD-16962"/>
<dbReference type="EMDB" id="EMD-16965"/>
<dbReference type="EMDB" id="EMD-17989"/>
<dbReference type="EMDB" id="EMD-17990"/>
<dbReference type="EMDB" id="EMD-17991"/>
<dbReference type="EMDB" id="EMD-19145"/>
<dbReference type="EMDB" id="EMD-19146"/>
<dbReference type="EMDB" id="EMD-19147"/>
<dbReference type="EMDB" id="EMD-19148"/>
<dbReference type="EMDB" id="EMD-35313"/>
<dbReference type="EMDB" id="EMD-35314"/>
<dbReference type="EMDB" id="EMD-35331"/>
<dbReference type="EMDB" id="EMD-35332"/>
<dbReference type="EMDB" id="EMD-35336"/>
<dbReference type="EMDB" id="EMD-35337"/>
<dbReference type="EMDB" id="EMD-35340"/>
<dbReference type="EMDB" id="EMD-35341"/>
<dbReference type="EMDB" id="EMD-35352"/>
<dbReference type="EMDB" id="EMD-35353"/>
<dbReference type="EMDB" id="EMD-38506"/>
<dbReference type="EMDB" id="EMD-38507"/>
<dbReference type="EMDB" id="EMD-38508"/>
<dbReference type="EMDB" id="EMD-38509"/>
<dbReference type="EMDB" id="EMD-38510"/>
<dbReference type="EMDB" id="EMD-38511"/>
<dbReference type="EMDB" id="EMD-38512"/>
<dbReference type="EMDB" id="EMD-38513"/>
<dbReference type="EMDB" id="EMD-38514"/>
<dbReference type="EMDB" id="EMD-38515"/>
<dbReference type="EMDB" id="EMD-38516"/>
<dbReference type="EMDB" id="EMD-38517"/>
<dbReference type="EMDB" id="EMD-38518"/>
<dbReference type="EMDB" id="EMD-38519"/>
<dbReference type="EMDB" id="EMD-38520"/>
<dbReference type="EMDB" id="EMD-38521"/>
<dbReference type="EMDB" id="EMD-42122"/>
<dbReference type="EMDB" id="EMD-4345"/>
<dbReference type="EMDB" id="EMD-4356"/>
<dbReference type="SMR" id="Q9CQ75"/>
<dbReference type="BioGRID" id="201716">
    <property type="interactions" value="45"/>
</dbReference>
<dbReference type="ComplexPortal" id="CPX-266">
    <property type="entry name" value="Mitochondrial respiratory chain complex I"/>
</dbReference>
<dbReference type="CORUM" id="Q9CQ75"/>
<dbReference type="FunCoup" id="Q9CQ75">
    <property type="interactions" value="2303"/>
</dbReference>
<dbReference type="IntAct" id="Q9CQ75">
    <property type="interactions" value="6"/>
</dbReference>
<dbReference type="STRING" id="10090.ENSMUSP00000014438"/>
<dbReference type="GlyGen" id="Q9CQ75">
    <property type="glycosylation" value="2 sites, 1 N-linked glycan (1 site), 1 O-linked glycan (1 site)"/>
</dbReference>
<dbReference type="iPTMnet" id="Q9CQ75"/>
<dbReference type="PhosphoSitePlus" id="Q9CQ75"/>
<dbReference type="SwissPalm" id="Q9CQ75"/>
<dbReference type="jPOST" id="Q9CQ75"/>
<dbReference type="PaxDb" id="10090-ENSMUSP00000014438"/>
<dbReference type="PeptideAtlas" id="Q9CQ75"/>
<dbReference type="ProteomicsDB" id="286164"/>
<dbReference type="Pumba" id="Q9CQ75"/>
<dbReference type="Antibodypedia" id="15357">
    <property type="antibodies" value="128 antibodies from 25 providers"/>
</dbReference>
<dbReference type="DNASU" id="17991"/>
<dbReference type="Ensembl" id="ENSMUST00000014438.5">
    <property type="protein sequence ID" value="ENSMUSP00000014438.5"/>
    <property type="gene ID" value="ENSMUSG00000014294.5"/>
</dbReference>
<dbReference type="GeneID" id="17991"/>
<dbReference type="KEGG" id="mmu:17991"/>
<dbReference type="UCSC" id="uc008eoj.2">
    <property type="organism name" value="mouse"/>
</dbReference>
<dbReference type="AGR" id="MGI:1343103"/>
<dbReference type="CTD" id="4695"/>
<dbReference type="MGI" id="MGI:1343103">
    <property type="gene designation" value="Ndufa2"/>
</dbReference>
<dbReference type="VEuPathDB" id="HostDB:ENSMUSG00000014294"/>
<dbReference type="eggNOG" id="KOG3446">
    <property type="taxonomic scope" value="Eukaryota"/>
</dbReference>
<dbReference type="GeneTree" id="ENSGT00390000006178"/>
<dbReference type="HOGENOM" id="CLU_110897_0_0_1"/>
<dbReference type="InParanoid" id="Q9CQ75"/>
<dbReference type="OMA" id="RIHLCQH"/>
<dbReference type="OrthoDB" id="10250268at2759"/>
<dbReference type="PhylomeDB" id="Q9CQ75"/>
<dbReference type="TreeFam" id="TF300229"/>
<dbReference type="Reactome" id="R-MMU-611105">
    <property type="pathway name" value="Respiratory electron transport"/>
</dbReference>
<dbReference type="Reactome" id="R-MMU-6799198">
    <property type="pathway name" value="Complex I biogenesis"/>
</dbReference>
<dbReference type="Reactome" id="R-MMU-9837999">
    <property type="pathway name" value="Mitochondrial protein degradation"/>
</dbReference>
<dbReference type="BioGRID-ORCS" id="17991">
    <property type="hits" value="25 hits in 81 CRISPR screens"/>
</dbReference>
<dbReference type="CD-CODE" id="CE726F99">
    <property type="entry name" value="Postsynaptic density"/>
</dbReference>
<dbReference type="ChiTaRS" id="Ndufa2">
    <property type="organism name" value="mouse"/>
</dbReference>
<dbReference type="PRO" id="PR:Q9CQ75"/>
<dbReference type="Proteomes" id="UP000000589">
    <property type="component" value="Chromosome 18"/>
</dbReference>
<dbReference type="RNAct" id="Q9CQ75">
    <property type="molecule type" value="protein"/>
</dbReference>
<dbReference type="Bgee" id="ENSMUSG00000014294">
    <property type="expression patterns" value="Expressed in aortic valve and 266 other cell types or tissues"/>
</dbReference>
<dbReference type="GO" id="GO:0005743">
    <property type="term" value="C:mitochondrial inner membrane"/>
    <property type="evidence" value="ECO:0000314"/>
    <property type="project" value="UniProtKB"/>
</dbReference>
<dbReference type="GO" id="GO:0005739">
    <property type="term" value="C:mitochondrion"/>
    <property type="evidence" value="ECO:0007005"/>
    <property type="project" value="MGI"/>
</dbReference>
<dbReference type="GO" id="GO:0045271">
    <property type="term" value="C:respiratory chain complex I"/>
    <property type="evidence" value="ECO:0000314"/>
    <property type="project" value="UniProtKB"/>
</dbReference>
<dbReference type="GO" id="GO:0008137">
    <property type="term" value="F:NADH dehydrogenase (ubiquinone) activity"/>
    <property type="evidence" value="ECO:0000304"/>
    <property type="project" value="MGI"/>
</dbReference>
<dbReference type="GO" id="GO:0009060">
    <property type="term" value="P:aerobic respiration"/>
    <property type="evidence" value="ECO:0000303"/>
    <property type="project" value="ComplexPortal"/>
</dbReference>
<dbReference type="GO" id="GO:0001835">
    <property type="term" value="P:blastocyst hatching"/>
    <property type="evidence" value="ECO:0000315"/>
    <property type="project" value="MGI"/>
</dbReference>
<dbReference type="GO" id="GO:0042776">
    <property type="term" value="P:proton motive force-driven mitochondrial ATP synthesis"/>
    <property type="evidence" value="ECO:0000303"/>
    <property type="project" value="ComplexPortal"/>
</dbReference>
<dbReference type="FunFam" id="3.40.30.10:FF:000127">
    <property type="entry name" value="NADH dehydrogenase [ubiquinone] 1 alpha subcomplex subunit 2"/>
    <property type="match status" value="1"/>
</dbReference>
<dbReference type="Gene3D" id="3.40.30.10">
    <property type="entry name" value="Glutaredoxin"/>
    <property type="match status" value="1"/>
</dbReference>
<dbReference type="InterPro" id="IPR016464">
    <property type="entry name" value="NADH_Ub_cplx-1_asu_su-2"/>
</dbReference>
<dbReference type="InterPro" id="IPR007741">
    <property type="entry name" value="Ribosomal_mL43/mS25/NADH_DH"/>
</dbReference>
<dbReference type="InterPro" id="IPR036249">
    <property type="entry name" value="Thioredoxin-like_sf"/>
</dbReference>
<dbReference type="PANTHER" id="PTHR12878:SF0">
    <property type="entry name" value="NADH DEHYDROGENASE [UBIQUINONE] 1 ALPHA SUBCOMPLEX SUBUNIT 2"/>
    <property type="match status" value="1"/>
</dbReference>
<dbReference type="PANTHER" id="PTHR12878">
    <property type="entry name" value="NADH-UBIQUINONE OXIDOREDUCTASE B8 SUBUNIT"/>
    <property type="match status" value="1"/>
</dbReference>
<dbReference type="Pfam" id="PF05047">
    <property type="entry name" value="L51_S25_CI-B8"/>
    <property type="match status" value="1"/>
</dbReference>
<dbReference type="PIRSF" id="PIRSF005822">
    <property type="entry name" value="NDUA2"/>
    <property type="match status" value="1"/>
</dbReference>
<dbReference type="SMART" id="SM00916">
    <property type="entry name" value="L51_S25_CI-B8"/>
    <property type="match status" value="1"/>
</dbReference>
<dbReference type="SUPFAM" id="SSF52833">
    <property type="entry name" value="Thioredoxin-like"/>
    <property type="match status" value="1"/>
</dbReference>
<reference key="1">
    <citation type="journal article" date="1999" name="J. Biol. Chem.">
        <title>Up-regulation of nuclear and mitochondrial genes in the skeletal muscle of mice lacking the heart/muscle isoform of the adenine nucleotide translocator.</title>
        <authorList>
            <person name="Murdock D.G."/>
            <person name="Boone B.E."/>
            <person name="Esposito L.A."/>
            <person name="Wallace D.C."/>
        </authorList>
    </citation>
    <scope>NUCLEOTIDE SEQUENCE [MRNA]</scope>
    <source>
        <strain>BALB/cJ</strain>
        <tissue>Skeletal muscle</tissue>
    </source>
</reference>
<reference key="2">
    <citation type="journal article" date="2005" name="Science">
        <title>The transcriptional landscape of the mammalian genome.</title>
        <authorList>
            <person name="Carninci P."/>
            <person name="Kasukawa T."/>
            <person name="Katayama S."/>
            <person name="Gough J."/>
            <person name="Frith M.C."/>
            <person name="Maeda N."/>
            <person name="Oyama R."/>
            <person name="Ravasi T."/>
            <person name="Lenhard B."/>
            <person name="Wells C."/>
            <person name="Kodzius R."/>
            <person name="Shimokawa K."/>
            <person name="Bajic V.B."/>
            <person name="Brenner S.E."/>
            <person name="Batalov S."/>
            <person name="Forrest A.R."/>
            <person name="Zavolan M."/>
            <person name="Davis M.J."/>
            <person name="Wilming L.G."/>
            <person name="Aidinis V."/>
            <person name="Allen J.E."/>
            <person name="Ambesi-Impiombato A."/>
            <person name="Apweiler R."/>
            <person name="Aturaliya R.N."/>
            <person name="Bailey T.L."/>
            <person name="Bansal M."/>
            <person name="Baxter L."/>
            <person name="Beisel K.W."/>
            <person name="Bersano T."/>
            <person name="Bono H."/>
            <person name="Chalk A.M."/>
            <person name="Chiu K.P."/>
            <person name="Choudhary V."/>
            <person name="Christoffels A."/>
            <person name="Clutterbuck D.R."/>
            <person name="Crowe M.L."/>
            <person name="Dalla E."/>
            <person name="Dalrymple B.P."/>
            <person name="de Bono B."/>
            <person name="Della Gatta G."/>
            <person name="di Bernardo D."/>
            <person name="Down T."/>
            <person name="Engstrom P."/>
            <person name="Fagiolini M."/>
            <person name="Faulkner G."/>
            <person name="Fletcher C.F."/>
            <person name="Fukushima T."/>
            <person name="Furuno M."/>
            <person name="Futaki S."/>
            <person name="Gariboldi M."/>
            <person name="Georgii-Hemming P."/>
            <person name="Gingeras T.R."/>
            <person name="Gojobori T."/>
            <person name="Green R.E."/>
            <person name="Gustincich S."/>
            <person name="Harbers M."/>
            <person name="Hayashi Y."/>
            <person name="Hensch T.K."/>
            <person name="Hirokawa N."/>
            <person name="Hill D."/>
            <person name="Huminiecki L."/>
            <person name="Iacono M."/>
            <person name="Ikeo K."/>
            <person name="Iwama A."/>
            <person name="Ishikawa T."/>
            <person name="Jakt M."/>
            <person name="Kanapin A."/>
            <person name="Katoh M."/>
            <person name="Kawasawa Y."/>
            <person name="Kelso J."/>
            <person name="Kitamura H."/>
            <person name="Kitano H."/>
            <person name="Kollias G."/>
            <person name="Krishnan S.P."/>
            <person name="Kruger A."/>
            <person name="Kummerfeld S.K."/>
            <person name="Kurochkin I.V."/>
            <person name="Lareau L.F."/>
            <person name="Lazarevic D."/>
            <person name="Lipovich L."/>
            <person name="Liu J."/>
            <person name="Liuni S."/>
            <person name="McWilliam S."/>
            <person name="Madan Babu M."/>
            <person name="Madera M."/>
            <person name="Marchionni L."/>
            <person name="Matsuda H."/>
            <person name="Matsuzawa S."/>
            <person name="Miki H."/>
            <person name="Mignone F."/>
            <person name="Miyake S."/>
            <person name="Morris K."/>
            <person name="Mottagui-Tabar S."/>
            <person name="Mulder N."/>
            <person name="Nakano N."/>
            <person name="Nakauchi H."/>
            <person name="Ng P."/>
            <person name="Nilsson R."/>
            <person name="Nishiguchi S."/>
            <person name="Nishikawa S."/>
            <person name="Nori F."/>
            <person name="Ohara O."/>
            <person name="Okazaki Y."/>
            <person name="Orlando V."/>
            <person name="Pang K.C."/>
            <person name="Pavan W.J."/>
            <person name="Pavesi G."/>
            <person name="Pesole G."/>
            <person name="Petrovsky N."/>
            <person name="Piazza S."/>
            <person name="Reed J."/>
            <person name="Reid J.F."/>
            <person name="Ring B.Z."/>
            <person name="Ringwald M."/>
            <person name="Rost B."/>
            <person name="Ruan Y."/>
            <person name="Salzberg S.L."/>
            <person name="Sandelin A."/>
            <person name="Schneider C."/>
            <person name="Schoenbach C."/>
            <person name="Sekiguchi K."/>
            <person name="Semple C.A."/>
            <person name="Seno S."/>
            <person name="Sessa L."/>
            <person name="Sheng Y."/>
            <person name="Shibata Y."/>
            <person name="Shimada H."/>
            <person name="Shimada K."/>
            <person name="Silva D."/>
            <person name="Sinclair B."/>
            <person name="Sperling S."/>
            <person name="Stupka E."/>
            <person name="Sugiura K."/>
            <person name="Sultana R."/>
            <person name="Takenaka Y."/>
            <person name="Taki K."/>
            <person name="Tammoja K."/>
            <person name="Tan S.L."/>
            <person name="Tang S."/>
            <person name="Taylor M.S."/>
            <person name="Tegner J."/>
            <person name="Teichmann S.A."/>
            <person name="Ueda H.R."/>
            <person name="van Nimwegen E."/>
            <person name="Verardo R."/>
            <person name="Wei C.L."/>
            <person name="Yagi K."/>
            <person name="Yamanishi H."/>
            <person name="Zabarovsky E."/>
            <person name="Zhu S."/>
            <person name="Zimmer A."/>
            <person name="Hide W."/>
            <person name="Bult C."/>
            <person name="Grimmond S.M."/>
            <person name="Teasdale R.D."/>
            <person name="Liu E.T."/>
            <person name="Brusic V."/>
            <person name="Quackenbush J."/>
            <person name="Wahlestedt C."/>
            <person name="Mattick J.S."/>
            <person name="Hume D.A."/>
            <person name="Kai C."/>
            <person name="Sasaki D."/>
            <person name="Tomaru Y."/>
            <person name="Fukuda S."/>
            <person name="Kanamori-Katayama M."/>
            <person name="Suzuki M."/>
            <person name="Aoki J."/>
            <person name="Arakawa T."/>
            <person name="Iida J."/>
            <person name="Imamura K."/>
            <person name="Itoh M."/>
            <person name="Kato T."/>
            <person name="Kawaji H."/>
            <person name="Kawagashira N."/>
            <person name="Kawashima T."/>
            <person name="Kojima M."/>
            <person name="Kondo S."/>
            <person name="Konno H."/>
            <person name="Nakano K."/>
            <person name="Ninomiya N."/>
            <person name="Nishio T."/>
            <person name="Okada M."/>
            <person name="Plessy C."/>
            <person name="Shibata K."/>
            <person name="Shiraki T."/>
            <person name="Suzuki S."/>
            <person name="Tagami M."/>
            <person name="Waki K."/>
            <person name="Watahiki A."/>
            <person name="Okamura-Oho Y."/>
            <person name="Suzuki H."/>
            <person name="Kawai J."/>
            <person name="Hayashizaki Y."/>
        </authorList>
    </citation>
    <scope>NUCLEOTIDE SEQUENCE [LARGE SCALE MRNA]</scope>
    <source>
        <strain>C57BL/6J</strain>
        <tissue>Embryo</tissue>
        <tissue>Kidney</tissue>
    </source>
</reference>
<reference key="3">
    <citation type="journal article" date="2004" name="Genome Res.">
        <title>The status, quality, and expansion of the NIH full-length cDNA project: the Mammalian Gene Collection (MGC).</title>
        <authorList>
            <consortium name="The MGC Project Team"/>
        </authorList>
    </citation>
    <scope>NUCLEOTIDE SEQUENCE [LARGE SCALE MRNA]</scope>
    <source>
        <tissue>Mammary tumor</tissue>
    </source>
</reference>
<reference key="4">
    <citation type="submission" date="2007-04" db="UniProtKB">
        <authorList>
            <person name="Lubec G."/>
            <person name="Kang S.U."/>
        </authorList>
    </citation>
    <scope>PROTEIN SEQUENCE OF 47-56 AND 76-98</scope>
    <scope>IDENTIFICATION BY MASS SPECTROMETRY</scope>
    <source>
        <strain>C57BL/6J</strain>
        <tissue>Brain</tissue>
    </source>
</reference>
<reference key="5">
    <citation type="journal article" date="2010" name="Cell">
        <title>A tissue-specific atlas of mouse protein phosphorylation and expression.</title>
        <authorList>
            <person name="Huttlin E.L."/>
            <person name="Jedrychowski M.P."/>
            <person name="Elias J.E."/>
            <person name="Goswami T."/>
            <person name="Rad R."/>
            <person name="Beausoleil S.A."/>
            <person name="Villen J."/>
            <person name="Haas W."/>
            <person name="Sowa M.E."/>
            <person name="Gygi S.P."/>
        </authorList>
    </citation>
    <scope>IDENTIFICATION BY MASS SPECTROMETRY [LARGE SCALE ANALYSIS]</scope>
    <source>
        <tissue>Brain</tissue>
        <tissue>Brown adipose tissue</tissue>
        <tissue>Heart</tissue>
        <tissue>Kidney</tissue>
        <tissue>Liver</tissue>
        <tissue>Lung</tissue>
        <tissue>Pancreas</tissue>
        <tissue>Spleen</tissue>
        <tissue>Testis</tissue>
    </source>
</reference>
<reference key="6">
    <citation type="journal article" date="2013" name="Mol. Cell">
        <title>SIRT5-mediated lysine desuccinylation impacts diverse metabolic pathways.</title>
        <authorList>
            <person name="Park J."/>
            <person name="Chen Y."/>
            <person name="Tishkoff D.X."/>
            <person name="Peng C."/>
            <person name="Tan M."/>
            <person name="Dai L."/>
            <person name="Xie Z."/>
            <person name="Zhang Y."/>
            <person name="Zwaans B.M."/>
            <person name="Skinner M.E."/>
            <person name="Lombard D.B."/>
            <person name="Zhao Y."/>
        </authorList>
    </citation>
    <scope>SUCCINYLATION [LARGE SCALE ANALYSIS] AT LYS-64</scope>
    <scope>IDENTIFICATION BY MASS SPECTROMETRY [LARGE SCALE ANALYSIS]</scope>
    <source>
        <tissue>Liver</tissue>
    </source>
</reference>
<reference key="7">
    <citation type="journal article" date="2013" name="Proc. Natl. Acad. Sci. U.S.A.">
        <title>Label-free quantitative proteomics of the lysine acetylome in mitochondria identifies substrates of SIRT3 in metabolic pathways.</title>
        <authorList>
            <person name="Rardin M.J."/>
            <person name="Newman J.C."/>
            <person name="Held J.M."/>
            <person name="Cusack M.P."/>
            <person name="Sorensen D.J."/>
            <person name="Li B."/>
            <person name="Schilling B."/>
            <person name="Mooney S.D."/>
            <person name="Kahn C.R."/>
            <person name="Verdin E."/>
            <person name="Gibson B.W."/>
        </authorList>
    </citation>
    <scope>ACETYLATION [LARGE SCALE ANALYSIS] AT LYS-64 AND LYS-75</scope>
    <scope>IDENTIFICATION BY MASS SPECTROMETRY [LARGE SCALE ANALYSIS]</scope>
    <source>
        <tissue>Liver</tissue>
    </source>
</reference>
<reference evidence="6" key="8">
    <citation type="journal article" date="2024" name="Nat. Struct. Mol. Biol.">
        <title>SCAF1 drives the compositional diversity of mammalian respirasomes.</title>
        <authorList>
            <person name="Vercellino I."/>
            <person name="Sazanov L.A."/>
        </authorList>
    </citation>
    <scope>STRUCTURE BY ELECTRON MICROSCOPY (3.60 ANGSTROMS) IN COMPLEX WITH MITOCHONDRIAL RESPIRATORY SUPERCOMPLEX</scope>
    <scope>FUNCTION</scope>
    <scope>SUBCELLULAR LOCATION</scope>
    <scope>SUBUNIT</scope>
</reference>
<organism>
    <name type="scientific">Mus musculus</name>
    <name type="common">Mouse</name>
    <dbReference type="NCBI Taxonomy" id="10090"/>
    <lineage>
        <taxon>Eukaryota</taxon>
        <taxon>Metazoa</taxon>
        <taxon>Chordata</taxon>
        <taxon>Craniata</taxon>
        <taxon>Vertebrata</taxon>
        <taxon>Euteleostomi</taxon>
        <taxon>Mammalia</taxon>
        <taxon>Eutheria</taxon>
        <taxon>Euarchontoglires</taxon>
        <taxon>Glires</taxon>
        <taxon>Rodentia</taxon>
        <taxon>Myomorpha</taxon>
        <taxon>Muroidea</taxon>
        <taxon>Muridae</taxon>
        <taxon>Murinae</taxon>
        <taxon>Mus</taxon>
        <taxon>Mus</taxon>
    </lineage>
</organism>
<name>NDUA2_MOUSE</name>
<evidence type="ECO:0000250" key="1"/>
<evidence type="ECO:0000250" key="2">
    <source>
        <dbReference type="UniProtKB" id="O43678"/>
    </source>
</evidence>
<evidence type="ECO:0000269" key="3">
    <source>
    </source>
</evidence>
<evidence type="ECO:0000269" key="4">
    <source>
    </source>
</evidence>
<evidence type="ECO:0000305" key="5"/>
<evidence type="ECO:0007744" key="6">
    <source>
        <dbReference type="PDB" id="8PW5"/>
    </source>
</evidence>
<evidence type="ECO:0007744" key="7">
    <source>
    </source>
</evidence>
<evidence type="ECO:0007744" key="8">
    <source>
    </source>
</evidence>
<evidence type="ECO:0007829" key="9">
    <source>
        <dbReference type="PDB" id="6ZTQ"/>
    </source>
</evidence>
<evidence type="ECO:0007829" key="10">
    <source>
        <dbReference type="PDB" id="7AK5"/>
    </source>
</evidence>
<evidence type="ECO:0007829" key="11">
    <source>
        <dbReference type="PDB" id="8IBA"/>
    </source>
</evidence>
<evidence type="ECO:0007829" key="12">
    <source>
        <dbReference type="PDB" id="8OM1"/>
    </source>
</evidence>
<sequence length="99" mass="10916">MAAAAASRAVGAKLGLREIRVHLCQRSPGSQGVRDFIVQRYVELKKAHPNLPILIRECSEVQPKLWARYAFGQEKTVSLNNLSADEVTRAMQNVLSGKA</sequence>